<feature type="chain" id="PRO_1000132974" description="Enolase">
    <location>
        <begin position="1"/>
        <end position="429"/>
    </location>
</feature>
<feature type="active site" description="Proton donor" evidence="1">
    <location>
        <position position="208"/>
    </location>
</feature>
<feature type="active site" description="Proton acceptor" evidence="1">
    <location>
        <position position="341"/>
    </location>
</feature>
<feature type="binding site" evidence="1">
    <location>
        <position position="166"/>
    </location>
    <ligand>
        <name>(2R)-2-phosphoglycerate</name>
        <dbReference type="ChEBI" id="CHEBI:58289"/>
    </ligand>
</feature>
<feature type="binding site" evidence="1">
    <location>
        <position position="245"/>
    </location>
    <ligand>
        <name>Mg(2+)</name>
        <dbReference type="ChEBI" id="CHEBI:18420"/>
    </ligand>
</feature>
<feature type="binding site" evidence="1">
    <location>
        <position position="289"/>
    </location>
    <ligand>
        <name>Mg(2+)</name>
        <dbReference type="ChEBI" id="CHEBI:18420"/>
    </ligand>
</feature>
<feature type="binding site" evidence="1">
    <location>
        <position position="316"/>
    </location>
    <ligand>
        <name>Mg(2+)</name>
        <dbReference type="ChEBI" id="CHEBI:18420"/>
    </ligand>
</feature>
<feature type="binding site" evidence="1">
    <location>
        <position position="341"/>
    </location>
    <ligand>
        <name>(2R)-2-phosphoglycerate</name>
        <dbReference type="ChEBI" id="CHEBI:58289"/>
    </ligand>
</feature>
<feature type="binding site" evidence="1">
    <location>
        <position position="370"/>
    </location>
    <ligand>
        <name>(2R)-2-phosphoglycerate</name>
        <dbReference type="ChEBI" id="CHEBI:58289"/>
    </ligand>
</feature>
<feature type="binding site" evidence="1">
    <location>
        <position position="371"/>
    </location>
    <ligand>
        <name>(2R)-2-phosphoglycerate</name>
        <dbReference type="ChEBI" id="CHEBI:58289"/>
    </ligand>
</feature>
<feature type="binding site" evidence="1">
    <location>
        <position position="392"/>
    </location>
    <ligand>
        <name>(2R)-2-phosphoglycerate</name>
        <dbReference type="ChEBI" id="CHEBI:58289"/>
    </ligand>
</feature>
<accession>A3M5Y1</accession>
<evidence type="ECO:0000255" key="1">
    <source>
        <dbReference type="HAMAP-Rule" id="MF_00318"/>
    </source>
</evidence>
<organism>
    <name type="scientific">Acinetobacter baumannii (strain ATCC 17978 / DSM 105126 / CIP 53.77 / LMG 1025 / NCDC KC755 / 5377)</name>
    <dbReference type="NCBI Taxonomy" id="400667"/>
    <lineage>
        <taxon>Bacteria</taxon>
        <taxon>Pseudomonadati</taxon>
        <taxon>Pseudomonadota</taxon>
        <taxon>Gammaproteobacteria</taxon>
        <taxon>Moraxellales</taxon>
        <taxon>Moraxellaceae</taxon>
        <taxon>Acinetobacter</taxon>
        <taxon>Acinetobacter calcoaceticus/baumannii complex</taxon>
    </lineage>
</organism>
<comment type="function">
    <text evidence="1">Catalyzes the reversible conversion of 2-phosphoglycerate (2-PG) into phosphoenolpyruvate (PEP). It is essential for the degradation of carbohydrates via glycolysis.</text>
</comment>
<comment type="catalytic activity">
    <reaction evidence="1">
        <text>(2R)-2-phosphoglycerate = phosphoenolpyruvate + H2O</text>
        <dbReference type="Rhea" id="RHEA:10164"/>
        <dbReference type="ChEBI" id="CHEBI:15377"/>
        <dbReference type="ChEBI" id="CHEBI:58289"/>
        <dbReference type="ChEBI" id="CHEBI:58702"/>
        <dbReference type="EC" id="4.2.1.11"/>
    </reaction>
</comment>
<comment type="cofactor">
    <cofactor evidence="1">
        <name>Mg(2+)</name>
        <dbReference type="ChEBI" id="CHEBI:18420"/>
    </cofactor>
    <text evidence="1">Binds a second Mg(2+) ion via substrate during catalysis.</text>
</comment>
<comment type="pathway">
    <text evidence="1">Carbohydrate degradation; glycolysis; pyruvate from D-glyceraldehyde 3-phosphate: step 4/5.</text>
</comment>
<comment type="subunit">
    <text evidence="1">Component of the RNA degradosome, a multiprotein complex involved in RNA processing and mRNA degradation.</text>
</comment>
<comment type="subcellular location">
    <subcellularLocation>
        <location evidence="1">Cytoplasm</location>
    </subcellularLocation>
    <subcellularLocation>
        <location evidence="1">Secreted</location>
    </subcellularLocation>
    <subcellularLocation>
        <location evidence="1">Cell surface</location>
    </subcellularLocation>
    <text evidence="1">Fractions of enolase are present in both the cytoplasm and on the cell surface.</text>
</comment>
<comment type="similarity">
    <text evidence="1">Belongs to the enolase family.</text>
</comment>
<gene>
    <name evidence="1" type="primary">eno</name>
    <name type="ordered locus">A1S_1898</name>
</gene>
<protein>
    <recommendedName>
        <fullName evidence="1">Enolase</fullName>
        <ecNumber evidence="1">4.2.1.11</ecNumber>
    </recommendedName>
    <alternativeName>
        <fullName evidence="1">2-phospho-D-glycerate hydro-lyase</fullName>
    </alternativeName>
    <alternativeName>
        <fullName evidence="1">2-phosphoglycerate dehydratase</fullName>
    </alternativeName>
</protein>
<name>ENO_ACIBT</name>
<reference key="1">
    <citation type="journal article" date="2007" name="Genes Dev.">
        <title>New insights into Acinetobacter baumannii pathogenesis revealed by high-density pyrosequencing and transposon mutagenesis.</title>
        <authorList>
            <person name="Smith M.G."/>
            <person name="Gianoulis T.A."/>
            <person name="Pukatzki S."/>
            <person name="Mekalanos J.J."/>
            <person name="Ornston L.N."/>
            <person name="Gerstein M."/>
            <person name="Snyder M."/>
        </authorList>
    </citation>
    <scope>NUCLEOTIDE SEQUENCE [LARGE SCALE GENOMIC DNA]</scope>
    <source>
        <strain>ATCC 17978 / DSM 105126 / CIP 53.77 / LMG 1025 / NCDC KC755 / 5377</strain>
    </source>
</reference>
<keyword id="KW-0963">Cytoplasm</keyword>
<keyword id="KW-0324">Glycolysis</keyword>
<keyword id="KW-0456">Lyase</keyword>
<keyword id="KW-0460">Magnesium</keyword>
<keyword id="KW-0479">Metal-binding</keyword>
<keyword id="KW-0964">Secreted</keyword>
<sequence length="429" mass="46216">MSQIVDIRAREILDSRGNPTIEADVILESGVVGRACAPSGASTGSREALELRDGDKSRYLGKGVRTAVQNVNSSIHELLVGQSVFEQKALDEKMIAFDGTENKSKLGANATLAVSLAAAHAAAAEQKLPLFQYIANLRGQTTLTMPVPMMNILNGGAHADNTVDIQEFMIEPVGFTSFAEALRAGAEVFHSLKSVLKKQGLNTAVGDEGGFAPNLRSNEEAITVILQAIEQTGYKAGSDIMLALDCASSEFYKNGQYILEGEGNKSFTSNQFADYLAGLVKQYPIISIEDGLDESDWEGWSYLTSILGDKIQLVGDDLFVTNPKILQRGIDEKVGNSILIKYNQIGTLTETLDAIYLAKANGYTTVISHRSGETEDSTIADLAVGTAAGQIKTGSLCRSDRVSKYNQLLRIEELTKAVYRGKAEFKGLN</sequence>
<proteinExistence type="inferred from homology"/>
<dbReference type="EC" id="4.2.1.11" evidence="1"/>
<dbReference type="EMBL" id="CP000521">
    <property type="protein sequence ID" value="ABO12325.2"/>
    <property type="molecule type" value="Genomic_DNA"/>
</dbReference>
<dbReference type="RefSeq" id="WP_000078452.1">
    <property type="nucleotide sequence ID" value="NZ_CP053098.1"/>
</dbReference>
<dbReference type="SMR" id="A3M5Y1"/>
<dbReference type="GeneID" id="92894149"/>
<dbReference type="KEGG" id="acb:A1S_1898"/>
<dbReference type="HOGENOM" id="CLU_031223_2_1_6"/>
<dbReference type="UniPathway" id="UPA00109">
    <property type="reaction ID" value="UER00187"/>
</dbReference>
<dbReference type="GO" id="GO:0009986">
    <property type="term" value="C:cell surface"/>
    <property type="evidence" value="ECO:0007669"/>
    <property type="project" value="UniProtKB-SubCell"/>
</dbReference>
<dbReference type="GO" id="GO:0005576">
    <property type="term" value="C:extracellular region"/>
    <property type="evidence" value="ECO:0007669"/>
    <property type="project" value="UniProtKB-SubCell"/>
</dbReference>
<dbReference type="GO" id="GO:0000015">
    <property type="term" value="C:phosphopyruvate hydratase complex"/>
    <property type="evidence" value="ECO:0007669"/>
    <property type="project" value="InterPro"/>
</dbReference>
<dbReference type="GO" id="GO:0000287">
    <property type="term" value="F:magnesium ion binding"/>
    <property type="evidence" value="ECO:0007669"/>
    <property type="project" value="UniProtKB-UniRule"/>
</dbReference>
<dbReference type="GO" id="GO:0004634">
    <property type="term" value="F:phosphopyruvate hydratase activity"/>
    <property type="evidence" value="ECO:0007669"/>
    <property type="project" value="UniProtKB-UniRule"/>
</dbReference>
<dbReference type="GO" id="GO:0006096">
    <property type="term" value="P:glycolytic process"/>
    <property type="evidence" value="ECO:0007669"/>
    <property type="project" value="UniProtKB-UniRule"/>
</dbReference>
<dbReference type="CDD" id="cd03313">
    <property type="entry name" value="enolase"/>
    <property type="match status" value="1"/>
</dbReference>
<dbReference type="FunFam" id="3.20.20.120:FF:000001">
    <property type="entry name" value="Enolase"/>
    <property type="match status" value="1"/>
</dbReference>
<dbReference type="FunFam" id="3.30.390.10:FF:000001">
    <property type="entry name" value="Enolase"/>
    <property type="match status" value="1"/>
</dbReference>
<dbReference type="Gene3D" id="3.20.20.120">
    <property type="entry name" value="Enolase-like C-terminal domain"/>
    <property type="match status" value="1"/>
</dbReference>
<dbReference type="Gene3D" id="3.30.390.10">
    <property type="entry name" value="Enolase-like, N-terminal domain"/>
    <property type="match status" value="1"/>
</dbReference>
<dbReference type="HAMAP" id="MF_00318">
    <property type="entry name" value="Enolase"/>
    <property type="match status" value="1"/>
</dbReference>
<dbReference type="InterPro" id="IPR000941">
    <property type="entry name" value="Enolase"/>
</dbReference>
<dbReference type="InterPro" id="IPR036849">
    <property type="entry name" value="Enolase-like_C_sf"/>
</dbReference>
<dbReference type="InterPro" id="IPR029017">
    <property type="entry name" value="Enolase-like_N"/>
</dbReference>
<dbReference type="InterPro" id="IPR020810">
    <property type="entry name" value="Enolase_C"/>
</dbReference>
<dbReference type="InterPro" id="IPR020809">
    <property type="entry name" value="Enolase_CS"/>
</dbReference>
<dbReference type="InterPro" id="IPR020811">
    <property type="entry name" value="Enolase_N"/>
</dbReference>
<dbReference type="NCBIfam" id="TIGR01060">
    <property type="entry name" value="eno"/>
    <property type="match status" value="1"/>
</dbReference>
<dbReference type="PANTHER" id="PTHR11902">
    <property type="entry name" value="ENOLASE"/>
    <property type="match status" value="1"/>
</dbReference>
<dbReference type="PANTHER" id="PTHR11902:SF1">
    <property type="entry name" value="ENOLASE"/>
    <property type="match status" value="1"/>
</dbReference>
<dbReference type="Pfam" id="PF00113">
    <property type="entry name" value="Enolase_C"/>
    <property type="match status" value="1"/>
</dbReference>
<dbReference type="Pfam" id="PF03952">
    <property type="entry name" value="Enolase_N"/>
    <property type="match status" value="1"/>
</dbReference>
<dbReference type="PIRSF" id="PIRSF001400">
    <property type="entry name" value="Enolase"/>
    <property type="match status" value="1"/>
</dbReference>
<dbReference type="PRINTS" id="PR00148">
    <property type="entry name" value="ENOLASE"/>
</dbReference>
<dbReference type="SFLD" id="SFLDF00002">
    <property type="entry name" value="enolase"/>
    <property type="match status" value="1"/>
</dbReference>
<dbReference type="SFLD" id="SFLDG00178">
    <property type="entry name" value="enolase"/>
    <property type="match status" value="1"/>
</dbReference>
<dbReference type="SMART" id="SM01192">
    <property type="entry name" value="Enolase_C"/>
    <property type="match status" value="1"/>
</dbReference>
<dbReference type="SMART" id="SM01193">
    <property type="entry name" value="Enolase_N"/>
    <property type="match status" value="1"/>
</dbReference>
<dbReference type="SUPFAM" id="SSF51604">
    <property type="entry name" value="Enolase C-terminal domain-like"/>
    <property type="match status" value="1"/>
</dbReference>
<dbReference type="SUPFAM" id="SSF54826">
    <property type="entry name" value="Enolase N-terminal domain-like"/>
    <property type="match status" value="1"/>
</dbReference>
<dbReference type="PROSITE" id="PS00164">
    <property type="entry name" value="ENOLASE"/>
    <property type="match status" value="1"/>
</dbReference>